<comment type="function">
    <text evidence="1">RNA chaperone that binds small regulatory RNA (sRNAs) and mRNAs to facilitate mRNA translational regulation in response to envelope stress, environmental stress and changes in metabolite concentrations. Also binds with high specificity to tRNAs.</text>
</comment>
<comment type="subunit">
    <text evidence="1">Homohexamer.</text>
</comment>
<comment type="similarity">
    <text evidence="1">Belongs to the Hfq family.</text>
</comment>
<proteinExistence type="inferred from homology"/>
<gene>
    <name evidence="1" type="primary">hfq</name>
    <name type="ordered locus">Pfl01_0523</name>
</gene>
<reference key="1">
    <citation type="journal article" date="2009" name="Genome Biol.">
        <title>Genomic and genetic analyses of diversity and plant interactions of Pseudomonas fluorescens.</title>
        <authorList>
            <person name="Silby M.W."/>
            <person name="Cerdeno-Tarraga A.M."/>
            <person name="Vernikos G.S."/>
            <person name="Giddens S.R."/>
            <person name="Jackson R.W."/>
            <person name="Preston G.M."/>
            <person name="Zhang X.-X."/>
            <person name="Moon C.D."/>
            <person name="Gehrig S.M."/>
            <person name="Godfrey S.A.C."/>
            <person name="Knight C.G."/>
            <person name="Malone J.G."/>
            <person name="Robinson Z."/>
            <person name="Spiers A.J."/>
            <person name="Harris S."/>
            <person name="Challis G.L."/>
            <person name="Yaxley A.M."/>
            <person name="Harris D."/>
            <person name="Seeger K."/>
            <person name="Murphy L."/>
            <person name="Rutter S."/>
            <person name="Squares R."/>
            <person name="Quail M.A."/>
            <person name="Saunders E."/>
            <person name="Mavromatis K."/>
            <person name="Brettin T.S."/>
            <person name="Bentley S.D."/>
            <person name="Hothersall J."/>
            <person name="Stephens E."/>
            <person name="Thomas C.M."/>
            <person name="Parkhill J."/>
            <person name="Levy S.B."/>
            <person name="Rainey P.B."/>
            <person name="Thomson N.R."/>
        </authorList>
    </citation>
    <scope>NUCLEOTIDE SEQUENCE [LARGE SCALE GENOMIC DNA]</scope>
    <source>
        <strain>Pf0-1</strain>
    </source>
</reference>
<protein>
    <recommendedName>
        <fullName evidence="1">RNA-binding protein Hfq</fullName>
    </recommendedName>
</protein>
<organism>
    <name type="scientific">Pseudomonas fluorescens (strain Pf0-1)</name>
    <dbReference type="NCBI Taxonomy" id="205922"/>
    <lineage>
        <taxon>Bacteria</taxon>
        <taxon>Pseudomonadati</taxon>
        <taxon>Pseudomonadota</taxon>
        <taxon>Gammaproteobacteria</taxon>
        <taxon>Pseudomonadales</taxon>
        <taxon>Pseudomonadaceae</taxon>
        <taxon>Pseudomonas</taxon>
    </lineage>
</organism>
<sequence length="86" mass="9398">MSKGHSLQDPYLNTLRKEKVGVSIYLVNGIKLQGTIESFDQFVILLKNTVSQMVYKHAISTVVPVRPIRLPSATESEAGDAEPGNA</sequence>
<dbReference type="EMBL" id="CP000094">
    <property type="protein sequence ID" value="ABA72267.1"/>
    <property type="molecule type" value="Genomic_DNA"/>
</dbReference>
<dbReference type="RefSeq" id="WP_007902656.1">
    <property type="nucleotide sequence ID" value="NC_007492.2"/>
</dbReference>
<dbReference type="SMR" id="Q3KIY9"/>
<dbReference type="GeneID" id="72192492"/>
<dbReference type="KEGG" id="pfo:Pfl01_0523"/>
<dbReference type="eggNOG" id="COG1923">
    <property type="taxonomic scope" value="Bacteria"/>
</dbReference>
<dbReference type="HOGENOM" id="CLU_113688_2_2_6"/>
<dbReference type="Proteomes" id="UP000002704">
    <property type="component" value="Chromosome"/>
</dbReference>
<dbReference type="GO" id="GO:0005829">
    <property type="term" value="C:cytosol"/>
    <property type="evidence" value="ECO:0007669"/>
    <property type="project" value="TreeGrafter"/>
</dbReference>
<dbReference type="GO" id="GO:0003723">
    <property type="term" value="F:RNA binding"/>
    <property type="evidence" value="ECO:0007669"/>
    <property type="project" value="UniProtKB-UniRule"/>
</dbReference>
<dbReference type="GO" id="GO:0006355">
    <property type="term" value="P:regulation of DNA-templated transcription"/>
    <property type="evidence" value="ECO:0007669"/>
    <property type="project" value="InterPro"/>
</dbReference>
<dbReference type="GO" id="GO:0043487">
    <property type="term" value="P:regulation of RNA stability"/>
    <property type="evidence" value="ECO:0007669"/>
    <property type="project" value="TreeGrafter"/>
</dbReference>
<dbReference type="GO" id="GO:0045974">
    <property type="term" value="P:regulation of translation, ncRNA-mediated"/>
    <property type="evidence" value="ECO:0007669"/>
    <property type="project" value="TreeGrafter"/>
</dbReference>
<dbReference type="CDD" id="cd01716">
    <property type="entry name" value="Hfq"/>
    <property type="match status" value="1"/>
</dbReference>
<dbReference type="FunFam" id="2.30.30.100:FF:000001">
    <property type="entry name" value="RNA-binding protein Hfq"/>
    <property type="match status" value="1"/>
</dbReference>
<dbReference type="Gene3D" id="2.30.30.100">
    <property type="match status" value="1"/>
</dbReference>
<dbReference type="HAMAP" id="MF_00436">
    <property type="entry name" value="Hfq"/>
    <property type="match status" value="1"/>
</dbReference>
<dbReference type="InterPro" id="IPR005001">
    <property type="entry name" value="Hfq"/>
</dbReference>
<dbReference type="InterPro" id="IPR010920">
    <property type="entry name" value="LSM_dom_sf"/>
</dbReference>
<dbReference type="InterPro" id="IPR047575">
    <property type="entry name" value="Sm"/>
</dbReference>
<dbReference type="NCBIfam" id="TIGR02383">
    <property type="entry name" value="Hfq"/>
    <property type="match status" value="1"/>
</dbReference>
<dbReference type="NCBIfam" id="NF001602">
    <property type="entry name" value="PRK00395.1"/>
    <property type="match status" value="1"/>
</dbReference>
<dbReference type="PANTHER" id="PTHR34772">
    <property type="entry name" value="RNA-BINDING PROTEIN HFQ"/>
    <property type="match status" value="1"/>
</dbReference>
<dbReference type="PANTHER" id="PTHR34772:SF1">
    <property type="entry name" value="RNA-BINDING PROTEIN HFQ"/>
    <property type="match status" value="1"/>
</dbReference>
<dbReference type="Pfam" id="PF17209">
    <property type="entry name" value="Hfq"/>
    <property type="match status" value="1"/>
</dbReference>
<dbReference type="SUPFAM" id="SSF50182">
    <property type="entry name" value="Sm-like ribonucleoproteins"/>
    <property type="match status" value="1"/>
</dbReference>
<dbReference type="PROSITE" id="PS52002">
    <property type="entry name" value="SM"/>
    <property type="match status" value="1"/>
</dbReference>
<keyword id="KW-0694">RNA-binding</keyword>
<keyword id="KW-0346">Stress response</keyword>
<evidence type="ECO:0000255" key="1">
    <source>
        <dbReference type="HAMAP-Rule" id="MF_00436"/>
    </source>
</evidence>
<evidence type="ECO:0000255" key="2">
    <source>
        <dbReference type="PROSITE-ProRule" id="PRU01346"/>
    </source>
</evidence>
<accession>Q3KIY9</accession>
<feature type="chain" id="PRO_0000265174" description="RNA-binding protein Hfq">
    <location>
        <begin position="1"/>
        <end position="86"/>
    </location>
</feature>
<feature type="domain" description="Sm" evidence="2">
    <location>
        <begin position="9"/>
        <end position="68"/>
    </location>
</feature>
<name>HFQ_PSEPF</name>